<protein>
    <recommendedName>
        <fullName evidence="1">SsrA-binding protein</fullName>
    </recommendedName>
    <alternativeName>
        <fullName evidence="1">Small protein B</fullName>
    </alternativeName>
</protein>
<accession>Q3B0J2</accession>
<evidence type="ECO:0000255" key="1">
    <source>
        <dbReference type="HAMAP-Rule" id="MF_00023"/>
    </source>
</evidence>
<evidence type="ECO:0000256" key="2">
    <source>
        <dbReference type="SAM" id="MobiDB-lite"/>
    </source>
</evidence>
<dbReference type="EMBL" id="CP000097">
    <property type="protein sequence ID" value="ABB25136.1"/>
    <property type="molecule type" value="Genomic_DNA"/>
</dbReference>
<dbReference type="RefSeq" id="WP_011359000.1">
    <property type="nucleotide sequence ID" value="NC_007513.1"/>
</dbReference>
<dbReference type="SMR" id="Q3B0J2"/>
<dbReference type="STRING" id="316279.Syncc9902_0161"/>
<dbReference type="KEGG" id="sye:Syncc9902_0161"/>
<dbReference type="eggNOG" id="COG0691">
    <property type="taxonomic scope" value="Bacteria"/>
</dbReference>
<dbReference type="HOGENOM" id="CLU_108953_0_1_3"/>
<dbReference type="OrthoDB" id="9805462at2"/>
<dbReference type="Proteomes" id="UP000002712">
    <property type="component" value="Chromosome"/>
</dbReference>
<dbReference type="GO" id="GO:0005829">
    <property type="term" value="C:cytosol"/>
    <property type="evidence" value="ECO:0007669"/>
    <property type="project" value="TreeGrafter"/>
</dbReference>
<dbReference type="GO" id="GO:0003723">
    <property type="term" value="F:RNA binding"/>
    <property type="evidence" value="ECO:0007669"/>
    <property type="project" value="UniProtKB-UniRule"/>
</dbReference>
<dbReference type="GO" id="GO:0070929">
    <property type="term" value="P:trans-translation"/>
    <property type="evidence" value="ECO:0007669"/>
    <property type="project" value="UniProtKB-UniRule"/>
</dbReference>
<dbReference type="CDD" id="cd09294">
    <property type="entry name" value="SmpB"/>
    <property type="match status" value="1"/>
</dbReference>
<dbReference type="Gene3D" id="2.40.280.10">
    <property type="match status" value="1"/>
</dbReference>
<dbReference type="HAMAP" id="MF_00023">
    <property type="entry name" value="SmpB"/>
    <property type="match status" value="1"/>
</dbReference>
<dbReference type="InterPro" id="IPR023620">
    <property type="entry name" value="SmpB"/>
</dbReference>
<dbReference type="InterPro" id="IPR000037">
    <property type="entry name" value="SsrA-bd_prot"/>
</dbReference>
<dbReference type="InterPro" id="IPR020081">
    <property type="entry name" value="SsrA-bd_prot_CS"/>
</dbReference>
<dbReference type="NCBIfam" id="NF003843">
    <property type="entry name" value="PRK05422.1"/>
    <property type="match status" value="1"/>
</dbReference>
<dbReference type="NCBIfam" id="TIGR00086">
    <property type="entry name" value="smpB"/>
    <property type="match status" value="1"/>
</dbReference>
<dbReference type="PANTHER" id="PTHR30308:SF2">
    <property type="entry name" value="SSRA-BINDING PROTEIN"/>
    <property type="match status" value="1"/>
</dbReference>
<dbReference type="PANTHER" id="PTHR30308">
    <property type="entry name" value="TMRNA-BINDING COMPONENT OF TRANS-TRANSLATION TAGGING COMPLEX"/>
    <property type="match status" value="1"/>
</dbReference>
<dbReference type="Pfam" id="PF01668">
    <property type="entry name" value="SmpB"/>
    <property type="match status" value="1"/>
</dbReference>
<dbReference type="SUPFAM" id="SSF74982">
    <property type="entry name" value="Small protein B (SmpB)"/>
    <property type="match status" value="1"/>
</dbReference>
<dbReference type="PROSITE" id="PS01317">
    <property type="entry name" value="SSRP"/>
    <property type="match status" value="1"/>
</dbReference>
<proteinExistence type="inferred from homology"/>
<name>SSRP_SYNS9</name>
<sequence length="167" mass="18664">MAKGGVKKAAAAAARAAANRLMADNRQARHQYEILETLETGIELVGTEVKSIRNGKANLRDGFCLIRNGELQLHNVHISPHSHASAYFNHDPLRTRKLLAHRREIDKLRGQLDKKGLALIPLNIHLKGSWIKITIGVGKGRKLHDKRAADKEKQSKKEVRSAMAKYQ</sequence>
<keyword id="KW-0963">Cytoplasm</keyword>
<keyword id="KW-1185">Reference proteome</keyword>
<keyword id="KW-0694">RNA-binding</keyword>
<feature type="chain" id="PRO_0000331102" description="SsrA-binding protein">
    <location>
        <begin position="1"/>
        <end position="167"/>
    </location>
</feature>
<feature type="region of interest" description="Disordered" evidence="2">
    <location>
        <begin position="144"/>
        <end position="167"/>
    </location>
</feature>
<feature type="compositionally biased region" description="Basic and acidic residues" evidence="2">
    <location>
        <begin position="146"/>
        <end position="160"/>
    </location>
</feature>
<comment type="function">
    <text evidence="1">Required for rescue of stalled ribosomes mediated by trans-translation. Binds to transfer-messenger RNA (tmRNA), required for stable association of tmRNA with ribosomes. tmRNA and SmpB together mimic tRNA shape, replacing the anticodon stem-loop with SmpB. tmRNA is encoded by the ssrA gene; the 2 termini fold to resemble tRNA(Ala) and it encodes a 'tag peptide', a short internal open reading frame. During trans-translation Ala-aminoacylated tmRNA acts like a tRNA, entering the A-site of stalled ribosomes, displacing the stalled mRNA. The ribosome then switches to translate the ORF on the tmRNA; the nascent peptide is terminated with the 'tag peptide' encoded by the tmRNA and targeted for degradation. The ribosome is freed to recommence translation, which seems to be the essential function of trans-translation.</text>
</comment>
<comment type="subcellular location">
    <subcellularLocation>
        <location evidence="1">Cytoplasm</location>
    </subcellularLocation>
    <text evidence="1">The tmRNA-SmpB complex associates with stalled 70S ribosomes.</text>
</comment>
<comment type="similarity">
    <text evidence="1">Belongs to the SmpB family.</text>
</comment>
<reference key="1">
    <citation type="submission" date="2005-08" db="EMBL/GenBank/DDBJ databases">
        <title>Complete sequence of Synechococcus sp. CC9902.</title>
        <authorList>
            <person name="Copeland A."/>
            <person name="Lucas S."/>
            <person name="Lapidus A."/>
            <person name="Barry K."/>
            <person name="Detter J.C."/>
            <person name="Glavina T."/>
            <person name="Hammon N."/>
            <person name="Israni S."/>
            <person name="Pitluck S."/>
            <person name="Martinez M."/>
            <person name="Schmutz J."/>
            <person name="Larimer F."/>
            <person name="Land M."/>
            <person name="Kyrpides N."/>
            <person name="Ivanova N."/>
            <person name="Richardson P."/>
        </authorList>
    </citation>
    <scope>NUCLEOTIDE SEQUENCE [LARGE SCALE GENOMIC DNA]</scope>
    <source>
        <strain>CC9902</strain>
    </source>
</reference>
<gene>
    <name evidence="1" type="primary">smpB</name>
    <name type="ordered locus">Syncc9902_0161</name>
</gene>
<organism>
    <name type="scientific">Synechococcus sp. (strain CC9902)</name>
    <dbReference type="NCBI Taxonomy" id="316279"/>
    <lineage>
        <taxon>Bacteria</taxon>
        <taxon>Bacillati</taxon>
        <taxon>Cyanobacteriota</taxon>
        <taxon>Cyanophyceae</taxon>
        <taxon>Synechococcales</taxon>
        <taxon>Synechococcaceae</taxon>
        <taxon>Synechococcus</taxon>
    </lineage>
</organism>